<gene>
    <name evidence="1" type="primary">rbcL</name>
</gene>
<evidence type="ECO:0000255" key="1">
    <source>
        <dbReference type="HAMAP-Rule" id="MF_01338"/>
    </source>
</evidence>
<reference key="1">
    <citation type="journal article" date="2000" name="Kew Bull.">
        <title>Phylogeny of the eudicots: a nearly complete familial analysis based on rbcL gene sequences.</title>
        <authorList>
            <person name="Savolainen V."/>
            <person name="Fay M.F."/>
            <person name="Albach D.C."/>
            <person name="Backlund A."/>
            <person name="van der Bank M."/>
            <person name="Cameron K.M."/>
            <person name="Johnson S.A."/>
            <person name="Lledo M.D."/>
            <person name="Pintaud J.C."/>
            <person name="Powell M."/>
            <person name="Sheahan M.C."/>
            <person name="Soltis D.E."/>
            <person name="Soltis P.S."/>
            <person name="Weston P."/>
            <person name="Whitten W.M."/>
            <person name="Wurdack K.J."/>
            <person name="Chase M.W."/>
        </authorList>
    </citation>
    <scope>NUCLEOTIDE SEQUENCE [GENOMIC DNA]</scope>
</reference>
<comment type="function">
    <text evidence="1">RuBisCO catalyzes two reactions: the carboxylation of D-ribulose 1,5-bisphosphate, the primary event in carbon dioxide fixation, as well as the oxidative fragmentation of the pentose substrate in the photorespiration process. Both reactions occur simultaneously and in competition at the same active site.</text>
</comment>
<comment type="catalytic activity">
    <reaction evidence="1">
        <text>2 (2R)-3-phosphoglycerate + 2 H(+) = D-ribulose 1,5-bisphosphate + CO2 + H2O</text>
        <dbReference type="Rhea" id="RHEA:23124"/>
        <dbReference type="ChEBI" id="CHEBI:15377"/>
        <dbReference type="ChEBI" id="CHEBI:15378"/>
        <dbReference type="ChEBI" id="CHEBI:16526"/>
        <dbReference type="ChEBI" id="CHEBI:57870"/>
        <dbReference type="ChEBI" id="CHEBI:58272"/>
        <dbReference type="EC" id="4.1.1.39"/>
    </reaction>
</comment>
<comment type="catalytic activity">
    <reaction evidence="1">
        <text>D-ribulose 1,5-bisphosphate + O2 = 2-phosphoglycolate + (2R)-3-phosphoglycerate + 2 H(+)</text>
        <dbReference type="Rhea" id="RHEA:36631"/>
        <dbReference type="ChEBI" id="CHEBI:15378"/>
        <dbReference type="ChEBI" id="CHEBI:15379"/>
        <dbReference type="ChEBI" id="CHEBI:57870"/>
        <dbReference type="ChEBI" id="CHEBI:58033"/>
        <dbReference type="ChEBI" id="CHEBI:58272"/>
    </reaction>
</comment>
<comment type="cofactor">
    <cofactor evidence="1">
        <name>Mg(2+)</name>
        <dbReference type="ChEBI" id="CHEBI:18420"/>
    </cofactor>
    <text evidence="1">Binds 1 Mg(2+) ion per subunit.</text>
</comment>
<comment type="subunit">
    <text evidence="1">Heterohexadecamer of 8 large chains and 8 small chains; disulfide-linked. The disulfide link is formed within the large subunit homodimers.</text>
</comment>
<comment type="subcellular location">
    <subcellularLocation>
        <location>Plastid</location>
        <location>Chloroplast</location>
    </subcellularLocation>
</comment>
<comment type="PTM">
    <text evidence="1">The disulfide bond which can form in the large chain dimeric partners within the hexadecamer appears to be associated with oxidative stress and protein turnover.</text>
</comment>
<comment type="miscellaneous">
    <text evidence="1">The basic functional RuBisCO is composed of a large chain homodimer in a 'head-to-tail' conformation. In form I RuBisCO this homodimer is arranged in a barrel-like tetramer with the small subunits forming a tetrameric 'cap' on each end of the 'barrel'.</text>
</comment>
<comment type="similarity">
    <text evidence="1">Belongs to the RuBisCO large chain family. Type I subfamily.</text>
</comment>
<feature type="chain" id="PRO_0000062571" description="Ribulose bisphosphate carboxylase large chain">
    <location>
        <begin position="1" status="less than"/>
        <end position="466"/>
    </location>
</feature>
<feature type="active site" description="Proton acceptor" evidence="1">
    <location>
        <position position="166"/>
    </location>
</feature>
<feature type="active site" description="Proton acceptor" evidence="1">
    <location>
        <position position="285"/>
    </location>
</feature>
<feature type="binding site" description="in homodimeric partner" evidence="1">
    <location>
        <position position="114"/>
    </location>
    <ligand>
        <name>substrate</name>
    </ligand>
</feature>
<feature type="binding site" evidence="1">
    <location>
        <position position="164"/>
    </location>
    <ligand>
        <name>substrate</name>
    </ligand>
</feature>
<feature type="binding site" evidence="1">
    <location>
        <position position="168"/>
    </location>
    <ligand>
        <name>substrate</name>
    </ligand>
</feature>
<feature type="binding site" description="via carbamate group" evidence="1">
    <location>
        <position position="192"/>
    </location>
    <ligand>
        <name>Mg(2+)</name>
        <dbReference type="ChEBI" id="CHEBI:18420"/>
    </ligand>
</feature>
<feature type="binding site" evidence="1">
    <location>
        <position position="194"/>
    </location>
    <ligand>
        <name>Mg(2+)</name>
        <dbReference type="ChEBI" id="CHEBI:18420"/>
    </ligand>
</feature>
<feature type="binding site" evidence="1">
    <location>
        <position position="195"/>
    </location>
    <ligand>
        <name>Mg(2+)</name>
        <dbReference type="ChEBI" id="CHEBI:18420"/>
    </ligand>
</feature>
<feature type="binding site" evidence="1">
    <location>
        <position position="286"/>
    </location>
    <ligand>
        <name>substrate</name>
    </ligand>
</feature>
<feature type="binding site" evidence="1">
    <location>
        <position position="318"/>
    </location>
    <ligand>
        <name>substrate</name>
    </ligand>
</feature>
<feature type="binding site" evidence="1">
    <location>
        <position position="370"/>
    </location>
    <ligand>
        <name>substrate</name>
    </ligand>
</feature>
<feature type="site" description="Transition state stabilizer" evidence="1">
    <location>
        <position position="325"/>
    </location>
</feature>
<feature type="modified residue" description="N6,N6,N6-trimethyllysine" evidence="1">
    <location>
        <position position="5"/>
    </location>
</feature>
<feature type="modified residue" description="N6-carboxylysine" evidence="1">
    <location>
        <position position="192"/>
    </location>
</feature>
<feature type="disulfide bond" description="Interchain; in linked form" evidence="1">
    <location>
        <position position="238"/>
    </location>
</feature>
<feature type="non-terminal residue">
    <location>
        <position position="1"/>
    </location>
</feature>
<name>RBL_POLSI</name>
<accession>Q9GHP8</accession>
<keyword id="KW-0113">Calvin cycle</keyword>
<keyword id="KW-0120">Carbon dioxide fixation</keyword>
<keyword id="KW-0150">Chloroplast</keyword>
<keyword id="KW-1015">Disulfide bond</keyword>
<keyword id="KW-0456">Lyase</keyword>
<keyword id="KW-0460">Magnesium</keyword>
<keyword id="KW-0479">Metal-binding</keyword>
<keyword id="KW-0488">Methylation</keyword>
<keyword id="KW-0503">Monooxygenase</keyword>
<keyword id="KW-0560">Oxidoreductase</keyword>
<keyword id="KW-0601">Photorespiration</keyword>
<keyword id="KW-0602">Photosynthesis</keyword>
<keyword id="KW-0934">Plastid</keyword>
<dbReference type="EC" id="4.1.1.39" evidence="1"/>
<dbReference type="EMBL" id="AJ402991">
    <property type="protein sequence ID" value="CAC04381.1"/>
    <property type="molecule type" value="Genomic_DNA"/>
</dbReference>
<dbReference type="SMR" id="Q9GHP8"/>
<dbReference type="GO" id="GO:0009507">
    <property type="term" value="C:chloroplast"/>
    <property type="evidence" value="ECO:0007669"/>
    <property type="project" value="UniProtKB-SubCell"/>
</dbReference>
<dbReference type="GO" id="GO:0000287">
    <property type="term" value="F:magnesium ion binding"/>
    <property type="evidence" value="ECO:0007669"/>
    <property type="project" value="InterPro"/>
</dbReference>
<dbReference type="GO" id="GO:0004497">
    <property type="term" value="F:monooxygenase activity"/>
    <property type="evidence" value="ECO:0007669"/>
    <property type="project" value="UniProtKB-KW"/>
</dbReference>
<dbReference type="GO" id="GO:0016984">
    <property type="term" value="F:ribulose-bisphosphate carboxylase activity"/>
    <property type="evidence" value="ECO:0007669"/>
    <property type="project" value="UniProtKB-EC"/>
</dbReference>
<dbReference type="GO" id="GO:0009853">
    <property type="term" value="P:photorespiration"/>
    <property type="evidence" value="ECO:0007669"/>
    <property type="project" value="UniProtKB-KW"/>
</dbReference>
<dbReference type="GO" id="GO:0019253">
    <property type="term" value="P:reductive pentose-phosphate cycle"/>
    <property type="evidence" value="ECO:0007669"/>
    <property type="project" value="UniProtKB-KW"/>
</dbReference>
<dbReference type="CDD" id="cd08212">
    <property type="entry name" value="RuBisCO_large_I"/>
    <property type="match status" value="1"/>
</dbReference>
<dbReference type="FunFam" id="3.20.20.110:FF:000001">
    <property type="entry name" value="Ribulose bisphosphate carboxylase large chain"/>
    <property type="match status" value="1"/>
</dbReference>
<dbReference type="FunFam" id="3.30.70.150:FF:000001">
    <property type="entry name" value="Ribulose bisphosphate carboxylase large chain"/>
    <property type="match status" value="1"/>
</dbReference>
<dbReference type="Gene3D" id="3.20.20.110">
    <property type="entry name" value="Ribulose bisphosphate carboxylase, large subunit, C-terminal domain"/>
    <property type="match status" value="1"/>
</dbReference>
<dbReference type="Gene3D" id="3.30.70.150">
    <property type="entry name" value="RuBisCO large subunit, N-terminal domain"/>
    <property type="match status" value="1"/>
</dbReference>
<dbReference type="HAMAP" id="MF_01338">
    <property type="entry name" value="RuBisCO_L_type1"/>
    <property type="match status" value="1"/>
</dbReference>
<dbReference type="InterPro" id="IPR033966">
    <property type="entry name" value="RuBisCO"/>
</dbReference>
<dbReference type="InterPro" id="IPR020878">
    <property type="entry name" value="RuBisCo_large_chain_AS"/>
</dbReference>
<dbReference type="InterPro" id="IPR000685">
    <property type="entry name" value="RuBisCO_lsu_C"/>
</dbReference>
<dbReference type="InterPro" id="IPR036376">
    <property type="entry name" value="RuBisCO_lsu_C_sf"/>
</dbReference>
<dbReference type="InterPro" id="IPR017443">
    <property type="entry name" value="RuBisCO_lsu_fd_N"/>
</dbReference>
<dbReference type="InterPro" id="IPR036422">
    <property type="entry name" value="RuBisCO_lsu_N_sf"/>
</dbReference>
<dbReference type="InterPro" id="IPR020888">
    <property type="entry name" value="RuBisCO_lsuI"/>
</dbReference>
<dbReference type="NCBIfam" id="NF003252">
    <property type="entry name" value="PRK04208.1"/>
    <property type="match status" value="1"/>
</dbReference>
<dbReference type="PANTHER" id="PTHR42704">
    <property type="entry name" value="RIBULOSE BISPHOSPHATE CARBOXYLASE"/>
    <property type="match status" value="1"/>
</dbReference>
<dbReference type="PANTHER" id="PTHR42704:SF16">
    <property type="entry name" value="RIBULOSE BISPHOSPHATE CARBOXYLASE LARGE CHAIN"/>
    <property type="match status" value="1"/>
</dbReference>
<dbReference type="Pfam" id="PF00016">
    <property type="entry name" value="RuBisCO_large"/>
    <property type="match status" value="1"/>
</dbReference>
<dbReference type="Pfam" id="PF02788">
    <property type="entry name" value="RuBisCO_large_N"/>
    <property type="match status" value="1"/>
</dbReference>
<dbReference type="SFLD" id="SFLDG01052">
    <property type="entry name" value="RuBisCO"/>
    <property type="match status" value="1"/>
</dbReference>
<dbReference type="SFLD" id="SFLDS00014">
    <property type="entry name" value="RuBisCO"/>
    <property type="match status" value="1"/>
</dbReference>
<dbReference type="SFLD" id="SFLDG00301">
    <property type="entry name" value="RuBisCO-like_proteins"/>
    <property type="match status" value="1"/>
</dbReference>
<dbReference type="SUPFAM" id="SSF51649">
    <property type="entry name" value="RuBisCo, C-terminal domain"/>
    <property type="match status" value="1"/>
</dbReference>
<dbReference type="SUPFAM" id="SSF54966">
    <property type="entry name" value="RuBisCO, large subunit, small (N-terminal) domain"/>
    <property type="match status" value="1"/>
</dbReference>
<dbReference type="PROSITE" id="PS00157">
    <property type="entry name" value="RUBISCO_LARGE"/>
    <property type="match status" value="1"/>
</dbReference>
<protein>
    <recommendedName>
        <fullName evidence="1">Ribulose bisphosphate carboxylase large chain</fullName>
        <shortName evidence="1">RuBisCO large subunit</shortName>
        <ecNumber evidence="1">4.1.1.39</ecNumber>
    </recommendedName>
</protein>
<organism>
    <name type="scientific">Poliothyrsis sinensis</name>
    <name type="common">Chinese pearlbloom tree</name>
    <dbReference type="NCBI Taxonomy" id="124846"/>
    <lineage>
        <taxon>Eukaryota</taxon>
        <taxon>Viridiplantae</taxon>
        <taxon>Streptophyta</taxon>
        <taxon>Embryophyta</taxon>
        <taxon>Tracheophyta</taxon>
        <taxon>Spermatophyta</taxon>
        <taxon>Magnoliopsida</taxon>
        <taxon>eudicotyledons</taxon>
        <taxon>Gunneridae</taxon>
        <taxon>Pentapetalae</taxon>
        <taxon>rosids</taxon>
        <taxon>fabids</taxon>
        <taxon>Malpighiales</taxon>
        <taxon>Salicaceae</taxon>
        <taxon>Flacourtieae</taxon>
        <taxon>Poliothyrsis</taxon>
    </lineage>
</organism>
<proteinExistence type="inferred from homology"/>
<sequence length="466" mass="51675">SVGFKAGVKDYKLTYYTPDYETKDTDILAAFRVTPQPGVPPEEAGAAVAAESSTGTWTTVWTDGLTSLDRYKGRCYDIEPVAGEENQYIAYVAYPLDLFEEGSVTNMFTSIVGNVFGFKALRALRLEDLRIPPAYSKTFQGPPHGIQVERDKLNKYGRPLLGCTIKPKLGLSAKNYGRAVYECLRGGLDFTKDDENVNSQPFMRWRDRFLFCAEALYKAQAETGEIKGHYLNATAGTCEEMIKRAVFARELGVPIVMHDYLTGGFTANTSLAHYCRDNGLLLHIHRAMHAVIDRQKNHGIHFRVLAKALRMSGGDHIHSGTVVGKLEGERDITLGFVDLLRDDFIEKDRSRGIYFTQDWVSLPGVLPVASGGIHVWHMPALTEIFGDDSVLQFGGGTLGHPWGNAPGAVANRVALEACVQARNEGRDLAREGNEIIREASKWSPELAAACEVWKEIKFEFQAMDTL</sequence>
<geneLocation type="chloroplast"/>